<proteinExistence type="evidence at protein level"/>
<comment type="function">
    <text evidence="3 4">Dual specificity regulatory protein that can control both sporulation and competence by acting on two distinct response regulators: Spo0F and ComA, respectively (PubMed:17581123, PubMed:21346797). Is involved in the temporal separation of competence and sporulation (PubMed:17581123). Acts as a phosphatase that specifically dephosphorylates the sporulation initiation phosphotransferase Spo0F and inhibits its activity (PubMed:17581123, PubMed:21346797). RapH can also antagonize sporulation by sterically blocking phosphoryl transfer to and from Spo0F (PubMed:21346797). In addition, inhibits the activity of ComA, a transcriptional factor that regulates the development of genetic competence (PubMed:17581123). Acts by binding to ComA, leading to the inhibition of its DNA-binding activity (PubMed:17581123).</text>
</comment>
<comment type="activity regulation">
    <text evidence="3 5">Both activities are inhibited by RapH.</text>
</comment>
<comment type="subunit">
    <text evidence="3 4">Homodimer (PubMed:21346797). Interacts with phosphorylated Spo0F (PubMed:21346797). Each RapH protomer is bound to a monomer of Spo0F, forming a heterotetrameric complex (PubMed:21346797). May also interact with non-phosphorylated Spo0F to inhibit the sporulation phosphorelay (PubMed:21346797). Interacts with the C-terminal DNA-binding region of ComA (PubMed:17581123). Does not interact with DegU (PubMed:17581123).</text>
</comment>
<comment type="interaction">
    <interactant intactId="EBI-15913371">
        <id>Q59HN8</id>
    </interactant>
    <interactant intactId="EBI-6418009">
        <id>P06628</id>
        <label>spo0F</label>
    </interactant>
    <organismsDiffer>false</organismsDiffer>
    <experiments>2</experiments>
</comment>
<comment type="subcellular location">
    <subcellularLocation>
        <location evidence="6">Cytoplasm</location>
    </subcellularLocation>
</comment>
<comment type="induction">
    <text evidence="2 3 5">Part of the rapH-phrH operon, which is transcribed from the SigA-driven rapH promoter (PubMed:21908671). Activated by the late competence transcription factor ComK (PubMed:17581123). Repressed by RghR (PubMed:16553878, PubMed:17581123).</text>
</comment>
<comment type="domain">
    <text evidence="4">Contains a small N-terminal 3-helix bundle domain and a large C-terminal TPR domain, connected by a linker region.</text>
</comment>
<comment type="disruption phenotype">
    <text evidence="3">Deletion of the gene induces both differentiation pathways and interferes with their temporal separation.</text>
</comment>
<comment type="similarity">
    <text evidence="6">Belongs to the Rap family.</text>
</comment>
<name>RAPH_BACSU</name>
<feature type="chain" id="PRO_0000106442" description="Response regulator aspartate phosphatase H">
    <location>
        <begin position="1"/>
        <end position="376"/>
    </location>
</feature>
<feature type="repeat" description="TPR 1" evidence="1">
    <location>
        <begin position="99"/>
        <end position="132"/>
    </location>
</feature>
<feature type="repeat" description="TPR 2" evidence="1">
    <location>
        <begin position="139"/>
        <end position="172"/>
    </location>
</feature>
<feature type="repeat" description="TPR 3" evidence="1">
    <location>
        <begin position="180"/>
        <end position="213"/>
    </location>
</feature>
<feature type="repeat" description="TPR 4" evidence="1">
    <location>
        <begin position="220"/>
        <end position="253"/>
    </location>
</feature>
<feature type="repeat" description="TPR 5" evidence="1">
    <location>
        <begin position="259"/>
        <end position="292"/>
    </location>
</feature>
<feature type="repeat" description="TPR 6" evidence="1">
    <location>
        <begin position="334"/>
        <end position="367"/>
    </location>
</feature>
<feature type="mutagenesis site" description="Displays drastically reduced activity in vivo." evidence="4">
    <original>E</original>
    <variation>A</variation>
    <location>
        <position position="45"/>
    </location>
</feature>
<feature type="mutagenesis site" description="Displays drastically reduced activity in vivo." evidence="4">
    <original>D</original>
    <variation>A</variation>
    <location>
        <position position="46"/>
    </location>
</feature>
<feature type="mutagenesis site" description="No change in phosphatase activity in vitro." evidence="4">
    <original>Q</original>
    <variation>E</variation>
    <location>
        <position position="47"/>
    </location>
</feature>
<feature type="mutagenesis site" description="Loss of phosphatase activity in vitro. Displays reduced activity in vivo." evidence="4">
    <original>Q</original>
    <variation>N</variation>
    <location>
        <position position="47"/>
    </location>
</feature>
<feature type="mutagenesis site" description="Decrease in phosphatase activity in vitro. Displays reduced activity in vivo." evidence="4">
    <original>L</original>
    <variation>A</variation>
    <location>
        <position position="50"/>
    </location>
</feature>
<feature type="mutagenesis site" description="Displays wild-type activity in vivo." evidence="4">
    <original>I</original>
    <variation>A</variation>
    <location>
        <position position="51"/>
    </location>
</feature>
<feature type="mutagenesis site" description="No change in phosphatase activity in vitro." evidence="4">
    <original>L</original>
    <variation>A</variation>
    <location>
        <position position="55"/>
    </location>
</feature>
<feature type="mutagenesis site" description="Decrease in phosphatase activity in vitro. Displays reduced activity in vivo." evidence="4">
    <original>F</original>
    <variation>A</variation>
    <location>
        <position position="58"/>
    </location>
</feature>
<feature type="mutagenesis site" description="Displays wild-type activity in vivo." evidence="4">
    <original>Q</original>
    <variation>A</variation>
    <location>
        <position position="90"/>
    </location>
</feature>
<feature type="mutagenesis site" description="Displays reduced activity in vivo." evidence="4">
    <original>L</original>
    <variation>A</variation>
    <location>
        <position position="96"/>
    </location>
</feature>
<feature type="mutagenesis site" description="Decrease in phosphatase activity in vitro. Displays reduced activity in vivo." evidence="4">
    <original>D</original>
    <variation>A</variation>
    <location>
        <position position="134"/>
    </location>
</feature>
<feature type="mutagenesis site" description="Decrease in phosphatase activity in vitro. Displays reduced activity in vivo." evidence="4">
    <original>E</original>
    <variation>A</variation>
    <location>
        <position position="137"/>
    </location>
</feature>
<feature type="mutagenesis site" description="Decrease in phosphatase activity in vitro. Displays reduced activity in vivo." evidence="4">
    <original>Y</original>
    <variation>A</variation>
    <location>
        <position position="175"/>
    </location>
</feature>
<feature type="helix" evidence="8">
    <location>
        <begin position="7"/>
        <end position="22"/>
    </location>
</feature>
<feature type="helix" evidence="8">
    <location>
        <begin position="26"/>
        <end position="39"/>
    </location>
</feature>
<feature type="helix" evidence="8">
    <location>
        <begin position="40"/>
        <end position="42"/>
    </location>
</feature>
<feature type="helix" evidence="8">
    <location>
        <begin position="47"/>
        <end position="65"/>
    </location>
</feature>
<feature type="helix" evidence="8">
    <location>
        <begin position="79"/>
        <end position="87"/>
    </location>
</feature>
<feature type="helix" evidence="8">
    <location>
        <begin position="88"/>
        <end position="90"/>
    </location>
</feature>
<feature type="helix" evidence="8">
    <location>
        <begin position="91"/>
        <end position="111"/>
    </location>
</feature>
<feature type="helix" evidence="8">
    <location>
        <begin position="115"/>
        <end position="126"/>
    </location>
</feature>
<feature type="helix" evidence="8">
    <location>
        <begin position="127"/>
        <end position="131"/>
    </location>
</feature>
<feature type="helix" evidence="8">
    <location>
        <begin position="135"/>
        <end position="151"/>
    </location>
</feature>
<feature type="helix" evidence="8">
    <location>
        <begin position="155"/>
        <end position="170"/>
    </location>
</feature>
<feature type="helix" evidence="8">
    <location>
        <begin position="176"/>
        <end position="192"/>
    </location>
</feature>
<feature type="helix" evidence="8">
    <location>
        <begin position="196"/>
        <end position="212"/>
    </location>
</feature>
<feature type="helix" evidence="8">
    <location>
        <begin position="216"/>
        <end position="233"/>
    </location>
</feature>
<feature type="helix" evidence="8">
    <location>
        <begin position="236"/>
        <end position="253"/>
    </location>
</feature>
<feature type="helix" evidence="8">
    <location>
        <begin position="255"/>
        <end position="257"/>
    </location>
</feature>
<feature type="helix" evidence="8">
    <location>
        <begin position="258"/>
        <end position="271"/>
    </location>
</feature>
<feature type="helix" evidence="8">
    <location>
        <begin position="275"/>
        <end position="288"/>
    </location>
</feature>
<feature type="helix" evidence="8">
    <location>
        <begin position="297"/>
        <end position="308"/>
    </location>
</feature>
<feature type="strand" evidence="8">
    <location>
        <begin position="309"/>
        <end position="311"/>
    </location>
</feature>
<feature type="helix" evidence="8">
    <location>
        <begin position="314"/>
        <end position="326"/>
    </location>
</feature>
<feature type="helix" evidence="8">
    <location>
        <begin position="330"/>
        <end position="346"/>
    </location>
</feature>
<feature type="helix" evidence="8">
    <location>
        <begin position="350"/>
        <end position="370"/>
    </location>
</feature>
<reference key="1">
    <citation type="journal article" date="1997" name="Nature">
        <title>The complete genome sequence of the Gram-positive bacterium Bacillus subtilis.</title>
        <authorList>
            <person name="Kunst F."/>
            <person name="Ogasawara N."/>
            <person name="Moszer I."/>
            <person name="Albertini A.M."/>
            <person name="Alloni G."/>
            <person name="Azevedo V."/>
            <person name="Bertero M.G."/>
            <person name="Bessieres P."/>
            <person name="Bolotin A."/>
            <person name="Borchert S."/>
            <person name="Borriss R."/>
            <person name="Boursier L."/>
            <person name="Brans A."/>
            <person name="Braun M."/>
            <person name="Brignell S.C."/>
            <person name="Bron S."/>
            <person name="Brouillet S."/>
            <person name="Bruschi C.V."/>
            <person name="Caldwell B."/>
            <person name="Capuano V."/>
            <person name="Carter N.M."/>
            <person name="Choi S.-K."/>
            <person name="Codani J.-J."/>
            <person name="Connerton I.F."/>
            <person name="Cummings N.J."/>
            <person name="Daniel R.A."/>
            <person name="Denizot F."/>
            <person name="Devine K.M."/>
            <person name="Duesterhoeft A."/>
            <person name="Ehrlich S.D."/>
            <person name="Emmerson P.T."/>
            <person name="Entian K.-D."/>
            <person name="Errington J."/>
            <person name="Fabret C."/>
            <person name="Ferrari E."/>
            <person name="Foulger D."/>
            <person name="Fritz C."/>
            <person name="Fujita M."/>
            <person name="Fujita Y."/>
            <person name="Fuma S."/>
            <person name="Galizzi A."/>
            <person name="Galleron N."/>
            <person name="Ghim S.-Y."/>
            <person name="Glaser P."/>
            <person name="Goffeau A."/>
            <person name="Golightly E.J."/>
            <person name="Grandi G."/>
            <person name="Guiseppi G."/>
            <person name="Guy B.J."/>
            <person name="Haga K."/>
            <person name="Haiech J."/>
            <person name="Harwood C.R."/>
            <person name="Henaut A."/>
            <person name="Hilbert H."/>
            <person name="Holsappel S."/>
            <person name="Hosono S."/>
            <person name="Hullo M.-F."/>
            <person name="Itaya M."/>
            <person name="Jones L.-M."/>
            <person name="Joris B."/>
            <person name="Karamata D."/>
            <person name="Kasahara Y."/>
            <person name="Klaerr-Blanchard M."/>
            <person name="Klein C."/>
            <person name="Kobayashi Y."/>
            <person name="Koetter P."/>
            <person name="Koningstein G."/>
            <person name="Krogh S."/>
            <person name="Kumano M."/>
            <person name="Kurita K."/>
            <person name="Lapidus A."/>
            <person name="Lardinois S."/>
            <person name="Lauber J."/>
            <person name="Lazarevic V."/>
            <person name="Lee S.-M."/>
            <person name="Levine A."/>
            <person name="Liu H."/>
            <person name="Masuda S."/>
            <person name="Mauel C."/>
            <person name="Medigue C."/>
            <person name="Medina N."/>
            <person name="Mellado R.P."/>
            <person name="Mizuno M."/>
            <person name="Moestl D."/>
            <person name="Nakai S."/>
            <person name="Noback M."/>
            <person name="Noone D."/>
            <person name="O'Reilly M."/>
            <person name="Ogawa K."/>
            <person name="Ogiwara A."/>
            <person name="Oudega B."/>
            <person name="Park S.-H."/>
            <person name="Parro V."/>
            <person name="Pohl T.M."/>
            <person name="Portetelle D."/>
            <person name="Porwollik S."/>
            <person name="Prescott A.M."/>
            <person name="Presecan E."/>
            <person name="Pujic P."/>
            <person name="Purnelle B."/>
            <person name="Rapoport G."/>
            <person name="Rey M."/>
            <person name="Reynolds S."/>
            <person name="Rieger M."/>
            <person name="Rivolta C."/>
            <person name="Rocha E."/>
            <person name="Roche B."/>
            <person name="Rose M."/>
            <person name="Sadaie Y."/>
            <person name="Sato T."/>
            <person name="Scanlan E."/>
            <person name="Schleich S."/>
            <person name="Schroeter R."/>
            <person name="Scoffone F."/>
            <person name="Sekiguchi J."/>
            <person name="Sekowska A."/>
            <person name="Seror S.J."/>
            <person name="Serror P."/>
            <person name="Shin B.-S."/>
            <person name="Soldo B."/>
            <person name="Sorokin A."/>
            <person name="Tacconi E."/>
            <person name="Takagi T."/>
            <person name="Takahashi H."/>
            <person name="Takemaru K."/>
            <person name="Takeuchi M."/>
            <person name="Tamakoshi A."/>
            <person name="Tanaka T."/>
            <person name="Terpstra P."/>
            <person name="Tognoni A."/>
            <person name="Tosato V."/>
            <person name="Uchiyama S."/>
            <person name="Vandenbol M."/>
            <person name="Vannier F."/>
            <person name="Vassarotti A."/>
            <person name="Viari A."/>
            <person name="Wambutt R."/>
            <person name="Wedler E."/>
            <person name="Wedler H."/>
            <person name="Weitzenegger T."/>
            <person name="Winters P."/>
            <person name="Wipat A."/>
            <person name="Yamamoto H."/>
            <person name="Yamane K."/>
            <person name="Yasumoto K."/>
            <person name="Yata K."/>
            <person name="Yoshida K."/>
            <person name="Yoshikawa H.-F."/>
            <person name="Zumstein E."/>
            <person name="Yoshikawa H."/>
            <person name="Danchin A."/>
        </authorList>
    </citation>
    <scope>NUCLEOTIDE SEQUENCE [LARGE SCALE GENOMIC DNA]</scope>
    <source>
        <strain>168</strain>
    </source>
</reference>
<reference key="2">
    <citation type="journal article" date="2009" name="Microbiology">
        <title>From a consortium sequence to a unified sequence: the Bacillus subtilis 168 reference genome a decade later.</title>
        <authorList>
            <person name="Barbe V."/>
            <person name="Cruveiller S."/>
            <person name="Kunst F."/>
            <person name="Lenoble P."/>
            <person name="Meurice G."/>
            <person name="Sekowska A."/>
            <person name="Vallenet D."/>
            <person name="Wang T."/>
            <person name="Moszer I."/>
            <person name="Medigue C."/>
            <person name="Danchin A."/>
        </authorList>
    </citation>
    <scope>SEQUENCE REVISION TO C-TERMINUS</scope>
</reference>
<reference key="3">
    <citation type="journal article" date="2006" name="Mol. Microbiol.">
        <title>Bacillus subtilis RghR (YvaN) represses rapG and rapH, which encode inhibitors of expression of the srfA operon.</title>
        <authorList>
            <person name="Hayashi K."/>
            <person name="Kensuke T."/>
            <person name="Kobayashi K."/>
            <person name="Ogasawara N."/>
            <person name="Ogura M."/>
        </authorList>
    </citation>
    <scope>NUCLEOTIDE SEQUENCE [GENOMIC DNA] OF 318-376</scope>
    <scope>INDUCTION</scope>
    <source>
        <strain>168</strain>
    </source>
</reference>
<reference key="4">
    <citation type="journal article" date="2007" name="Mol. Microbiol.">
        <title>Temporal separation of distinct differentiation pathways by a dual specificity Rap-Phr system in Bacillus subtilis.</title>
        <authorList>
            <person name="Smits W.K."/>
            <person name="Bongiorni C."/>
            <person name="Veening J.W."/>
            <person name="Hamoen L.W."/>
            <person name="Kuipers O.P."/>
            <person name="Perego M."/>
        </authorList>
    </citation>
    <scope>FUNCTION</scope>
    <scope>CATALYTIC ACTIVITY</scope>
    <scope>ACTIVITY REGULATION</scope>
    <scope>INTERACTION WITH COMA</scope>
    <scope>INDUCTION</scope>
    <scope>DISRUPTION PHENOTYPE</scope>
</reference>
<reference key="5">
    <citation type="journal article" date="2011" name="J. Bacteriol.">
        <title>An atypical Phr peptide regulates the developmental switch protein RapH.</title>
        <authorList>
            <person name="Mirouze N."/>
            <person name="Parashar V."/>
            <person name="Baker M.D."/>
            <person name="Dubnau D.A."/>
            <person name="Neiditch M.B."/>
        </authorList>
    </citation>
    <scope>ACTIVITY REGULATION</scope>
    <scope>INDUCTION</scope>
</reference>
<reference evidence="7" key="6">
    <citation type="journal article" date="2011" name="PLoS Biol.">
        <title>Structural basis of response regulator dephosphorylation by Rap phosphatases.</title>
        <authorList>
            <person name="Parashar V."/>
            <person name="Mirouze N."/>
            <person name="Dubnau D.A."/>
            <person name="Neiditch M.B."/>
        </authorList>
    </citation>
    <scope>X-RAY CRYSTALLOGRAPHY (2.19 ANGSTROMS) IN COMPLEX WITH SPO0F</scope>
    <scope>FUNCTION</scope>
    <scope>CATALYTIC ACTIVITY</scope>
    <scope>SUBUNIT</scope>
    <scope>INTERACTION WITH SPO0F</scope>
    <scope>DOMAIN</scope>
    <scope>MUTAGENESIS OF GLU-45; ASP-46; GLN-47; LEU-50; ILE-51; LEU-55; PHE-58; GLN-90; LEU-96; ASP-134; GLU-137 AND TYR-175</scope>
</reference>
<keyword id="KW-0002">3D-structure</keyword>
<keyword id="KW-0178">Competence</keyword>
<keyword id="KW-0963">Cytoplasm</keyword>
<keyword id="KW-0378">Hydrolase</keyword>
<keyword id="KW-0904">Protein phosphatase</keyword>
<keyword id="KW-1185">Reference proteome</keyword>
<keyword id="KW-0677">Repeat</keyword>
<keyword id="KW-0749">Sporulation</keyword>
<keyword id="KW-0802">TPR repeat</keyword>
<organism>
    <name type="scientific">Bacillus subtilis (strain 168)</name>
    <dbReference type="NCBI Taxonomy" id="224308"/>
    <lineage>
        <taxon>Bacteria</taxon>
        <taxon>Bacillati</taxon>
        <taxon>Bacillota</taxon>
        <taxon>Bacilli</taxon>
        <taxon>Bacillales</taxon>
        <taxon>Bacillaceae</taxon>
        <taxon>Bacillus</taxon>
    </lineage>
</organism>
<evidence type="ECO:0000255" key="1"/>
<evidence type="ECO:0000269" key="2">
    <source>
    </source>
</evidence>
<evidence type="ECO:0000269" key="3">
    <source>
    </source>
</evidence>
<evidence type="ECO:0000269" key="4">
    <source>
    </source>
</evidence>
<evidence type="ECO:0000269" key="5">
    <source>
    </source>
</evidence>
<evidence type="ECO:0000305" key="6"/>
<evidence type="ECO:0007744" key="7">
    <source>
        <dbReference type="PDB" id="3Q15"/>
    </source>
</evidence>
<evidence type="ECO:0007829" key="8">
    <source>
        <dbReference type="PDB" id="3Q15"/>
    </source>
</evidence>
<protein>
    <recommendedName>
        <fullName evidence="6">Response regulator aspartate phosphatase H</fullName>
        <ecNumber evidence="3 4">3.1.3.-</ecNumber>
    </recommendedName>
    <alternativeName>
        <fullName>PSP28</fullName>
    </alternativeName>
</protein>
<dbReference type="EC" id="3.1.3.-" evidence="3 4"/>
<dbReference type="EMBL" id="AL009126">
    <property type="protein sequence ID" value="CAB12503.2"/>
    <property type="molecule type" value="Genomic_DNA"/>
</dbReference>
<dbReference type="EMBL" id="AB207815">
    <property type="protein sequence ID" value="BAD91217.1"/>
    <property type="molecule type" value="Genomic_DNA"/>
</dbReference>
<dbReference type="PIR" id="C69689">
    <property type="entry name" value="C69689"/>
</dbReference>
<dbReference type="RefSeq" id="NP_388565.2">
    <property type="nucleotide sequence ID" value="NC_000964.3"/>
</dbReference>
<dbReference type="RefSeq" id="WP_003243267.1">
    <property type="nucleotide sequence ID" value="NZ_OZ025638.1"/>
</dbReference>
<dbReference type="PDB" id="3Q15">
    <property type="method" value="X-ray"/>
    <property type="resolution" value="2.19 A"/>
    <property type="chains" value="A/B=1-376"/>
</dbReference>
<dbReference type="PDBsum" id="3Q15"/>
<dbReference type="SMR" id="Q59HN8"/>
<dbReference type="DIP" id="DIP-58964N"/>
<dbReference type="FunCoup" id="Q59HN8">
    <property type="interactions" value="87"/>
</dbReference>
<dbReference type="IntAct" id="Q59HN8">
    <property type="interactions" value="1"/>
</dbReference>
<dbReference type="STRING" id="224308.BSU06830"/>
<dbReference type="PaxDb" id="224308-BSU06830"/>
<dbReference type="EnsemblBacteria" id="CAB12503">
    <property type="protein sequence ID" value="CAB12503"/>
    <property type="gene ID" value="BSU_06830"/>
</dbReference>
<dbReference type="GeneID" id="936065"/>
<dbReference type="KEGG" id="bsu:BSU06830"/>
<dbReference type="PATRIC" id="fig|224308.179.peg.742"/>
<dbReference type="eggNOG" id="COG0457">
    <property type="taxonomic scope" value="Bacteria"/>
</dbReference>
<dbReference type="InParanoid" id="Q59HN8"/>
<dbReference type="OrthoDB" id="2830177at2"/>
<dbReference type="PhylomeDB" id="Q59HN8"/>
<dbReference type="BioCyc" id="BSUB:BSU06830-MONOMER"/>
<dbReference type="EvolutionaryTrace" id="Q59HN8"/>
<dbReference type="Proteomes" id="UP000001570">
    <property type="component" value="Chromosome"/>
</dbReference>
<dbReference type="GO" id="GO:0005737">
    <property type="term" value="C:cytoplasm"/>
    <property type="evidence" value="ECO:0007669"/>
    <property type="project" value="UniProtKB-SubCell"/>
</dbReference>
<dbReference type="GO" id="GO:0004721">
    <property type="term" value="F:phosphoprotein phosphatase activity"/>
    <property type="evidence" value="ECO:0007669"/>
    <property type="project" value="UniProtKB-KW"/>
</dbReference>
<dbReference type="GO" id="GO:0030420">
    <property type="term" value="P:establishment of competence for transformation"/>
    <property type="evidence" value="ECO:0007669"/>
    <property type="project" value="UniProtKB-KW"/>
</dbReference>
<dbReference type="GO" id="GO:0030435">
    <property type="term" value="P:sporulation resulting in formation of a cellular spore"/>
    <property type="evidence" value="ECO:0007669"/>
    <property type="project" value="UniProtKB-KW"/>
</dbReference>
<dbReference type="Gene3D" id="1.25.40.10">
    <property type="entry name" value="Tetratricopeptide repeat domain"/>
    <property type="match status" value="1"/>
</dbReference>
<dbReference type="InterPro" id="IPR051476">
    <property type="entry name" value="Bac_ResReg_Asp_Phosphatase"/>
</dbReference>
<dbReference type="InterPro" id="IPR011990">
    <property type="entry name" value="TPR-like_helical_dom_sf"/>
</dbReference>
<dbReference type="InterPro" id="IPR019734">
    <property type="entry name" value="TPR_rpt"/>
</dbReference>
<dbReference type="PANTHER" id="PTHR46630">
    <property type="entry name" value="TETRATRICOPEPTIDE REPEAT PROTEIN 29"/>
    <property type="match status" value="1"/>
</dbReference>
<dbReference type="PANTHER" id="PTHR46630:SF1">
    <property type="entry name" value="TETRATRICOPEPTIDE REPEAT PROTEIN 29"/>
    <property type="match status" value="1"/>
</dbReference>
<dbReference type="Pfam" id="PF18801">
    <property type="entry name" value="RapH_N"/>
    <property type="match status" value="1"/>
</dbReference>
<dbReference type="Pfam" id="PF13176">
    <property type="entry name" value="TPR_7"/>
    <property type="match status" value="1"/>
</dbReference>
<dbReference type="SMART" id="SM00028">
    <property type="entry name" value="TPR"/>
    <property type="match status" value="6"/>
</dbReference>
<dbReference type="SUPFAM" id="SSF48452">
    <property type="entry name" value="TPR-like"/>
    <property type="match status" value="1"/>
</dbReference>
<dbReference type="PROSITE" id="PS50005">
    <property type="entry name" value="TPR"/>
    <property type="match status" value="4"/>
</dbReference>
<dbReference type="PROSITE" id="PS50293">
    <property type="entry name" value="TPR_REGION"/>
    <property type="match status" value="1"/>
</dbReference>
<sequence length="376" mass="44003">MSQAIPSSRVGVKINEWYKMIRQFSVPDAEILKAEVEQDIQQMEEDQDLLIYYSLMCFRHQLMLDYLEPGKTYGNRPTVTELLETIETPQKKLTGLLKYYSLFFRGMYEFDQKEYVEAIGYYREAEKELPFVSDDIEKAEFHFKVAEAYYHMKQTHVSMYHILQALDIYQNHPLYSIRTIQSLFVIAGNYDDFKHYDKALPHLEAALELAMDIQNDRFIAISLLNIANSYDRSGDDQMAVEHFQKAAKVSREKVPDLLPKVLFGLSWTLCKAGQTQKAFQFIEEGLDHITARSHKFYKELFLFLQAVYKETVDERKIHDLLSYFEKKNLHAYIEACARSAAAVFESSCHFEQAAAFYRKVLKAQEDILKGECLYAY</sequence>
<accession>Q59HN8</accession>
<accession>O31508</accession>
<accession>P40771</accession>
<gene>
    <name type="primary">rapH</name>
    <name type="synonym">yeeH</name>
    <name type="synonym">yzqA</name>
    <name type="ordered locus">BSU06830</name>
</gene>